<reference key="1">
    <citation type="journal article" date="1998" name="Proc. Natl. Acad. Sci. U.S.A.">
        <title>A Vibrio cholerae pathogenicity island associated with epidemic and pandemic strains.</title>
        <authorList>
            <person name="Karaolis D.K.R."/>
            <person name="Johnson J.A."/>
            <person name="Bailey C.C."/>
            <person name="Boedeker E.C."/>
            <person name="Kaper J.B."/>
            <person name="Reeves P.R."/>
        </authorList>
    </citation>
    <scope>NUCLEOTIDE SEQUENCE [GENOMIC DNA]</scope>
    <source>
        <strain>ATCC 39315 / El Tor Inaba N16961</strain>
    </source>
</reference>
<reference key="2">
    <citation type="journal article" date="2000" name="Nature">
        <title>DNA sequence of both chromosomes of the cholera pathogen Vibrio cholerae.</title>
        <authorList>
            <person name="Heidelberg J.F."/>
            <person name="Eisen J.A."/>
            <person name="Nelson W.C."/>
            <person name="Clayton R.A."/>
            <person name="Gwinn M.L."/>
            <person name="Dodson R.J."/>
            <person name="Haft D.H."/>
            <person name="Hickey E.K."/>
            <person name="Peterson J.D."/>
            <person name="Umayam L.A."/>
            <person name="Gill S.R."/>
            <person name="Nelson K.E."/>
            <person name="Read T.D."/>
            <person name="Tettelin H."/>
            <person name="Richardson D.L."/>
            <person name="Ermolaeva M.D."/>
            <person name="Vamathevan J.J."/>
            <person name="Bass S."/>
            <person name="Qin H."/>
            <person name="Dragoi I."/>
            <person name="Sellers P."/>
            <person name="McDonald L.A."/>
            <person name="Utterback T.R."/>
            <person name="Fleischmann R.D."/>
            <person name="Nierman W.C."/>
            <person name="White O."/>
            <person name="Salzberg S.L."/>
            <person name="Smith H.O."/>
            <person name="Colwell R.R."/>
            <person name="Mekalanos J.J."/>
            <person name="Venter J.C."/>
            <person name="Fraser C.M."/>
        </authorList>
    </citation>
    <scope>NUCLEOTIDE SEQUENCE [LARGE SCALE GENOMIC DNA]</scope>
    <source>
        <strain>ATCC 39315 / El Tor Inaba N16961</strain>
    </source>
</reference>
<reference key="3">
    <citation type="journal article" date="1991" name="J. Bacteriol.">
        <title>Expression of the Vibrio cholerae gene encoding aldehyde dehydrogenase is under control of ToxR, the cholera toxin transcriptional activator.</title>
        <authorList>
            <person name="Parsot C.R."/>
            <person name="Mekalanos J.J."/>
        </authorList>
    </citation>
    <scope>NUCLEOTIDE SEQUENCE [GENOMIC DNA] OF 1-68</scope>
    <source>
        <strain>KP8.56</strain>
    </source>
</reference>
<proteinExistence type="inferred from homology"/>
<accession>P0C6Q7</accession>
<accession>O68335</accession>
<accession>P24019</accession>
<accession>Q56595</accession>
<accession>Q9KTR9</accession>
<sequence length="1002" mass="114630">MVVRYSLLMKVSFAILIFLVGCNENATSSNDQYLTDPDISEQTKKPSRPIIDEKNKGVTDTSVTIEWDKIECEKNFSHYNVIVYRKDRIEDVITIRTRNNSVFIDDLKPNSQYSIDVSSCLHSACSESAKIEFITLNEIDYYHTTEIEKNVYGSLEGEVRFVQTHVISPEGRKNEPEIITGRDALILFKPSIKNSSSILMKIYSEDGLTSKVVMKSPSMLPKTDQPIDIDENNKVVSYSNSYWSAEIPWNKMKSGMSLHFEDENGNLGIIESERIKFSAPSELIIQNIDLGMLYKPRGRNIVIKELERTAVDYFQKVPVSKLIFSDYTPIHFEKITLPNGTVYTEKSADIGGWHQGDMREAVGKALVSTGINNANLGIVASSGYSQQYNRLTNHITAHTNIGYYNNGVVVHGGSGGGGIVTLENTLHNEWSHELGHNYGLGHYVAGGTSHGPDTSWGWDGYYKRFIANFDWKRSPQSNIRPDNQEVVKPFMDKYTYLWDAMSGGYDHQNGIISRYTLHHPYVARIIQDWLKNGAVVINNDYMVWDELKNIYVYKGTNFKVPIKKGVPVVTILGVYDPDKINPSQLYPPTYSNYGNIFDLEKPRSESSLKGWQYVKDVNYLDRVNTHWHTMLVNRKEEKICRFSYLSPKGKKFEFLGYEDIENKICTGGRSIHYLEDGKKNPIESKYNDYFLLSIDGDGEISYVPDSTIGESKICSLKMSGTVYGAGFIKGNSCRQIDGVFMNGFQWAFTLNQSGVNSTYTWSNECVLKIKDKDNNIESISIPNYRIEKNQSNKIHLNISREKPIIDINVYCGEHELTSIKVSDNPDIKLLKGPIIVGQEHGYTSYEPKLPSGWFKHYDNFEPKNEINHELGKMRVNDNDEYICRFNFSDSDREMKFVGYVSQLSESKYICTGGSEIYYKKNEINIELSSKENDFEWLSVRDKNLVGSKIEFDNNKTLCVLDNRSFYGAGYLDENNRCTQDRQIHWSNGKQWLFSTYKTMTYH</sequence>
<evidence type="ECO:0000250" key="1"/>
<evidence type="ECO:0000255" key="2">
    <source>
        <dbReference type="PROSITE-ProRule" id="PRU00303"/>
    </source>
</evidence>
<evidence type="ECO:0000255" key="3">
    <source>
        <dbReference type="PROSITE-ProRule" id="PRU00316"/>
    </source>
</evidence>
<evidence type="ECO:0000256" key="4">
    <source>
        <dbReference type="SAM" id="MobiDB-lite"/>
    </source>
</evidence>
<evidence type="ECO:0000305" key="5"/>
<keyword id="KW-1003">Cell membrane</keyword>
<keyword id="KW-0378">Hydrolase</keyword>
<keyword id="KW-0449">Lipoprotein</keyword>
<keyword id="KW-0472">Membrane</keyword>
<keyword id="KW-0479">Metal-binding</keyword>
<keyword id="KW-0482">Metalloprotease</keyword>
<keyword id="KW-0564">Palmitate</keyword>
<keyword id="KW-0645">Protease</keyword>
<keyword id="KW-1185">Reference proteome</keyword>
<keyword id="KW-0732">Signal</keyword>
<keyword id="KW-0862">Zinc</keyword>
<comment type="cofactor">
    <cofactor evidence="1">
        <name>Zn(2+)</name>
        <dbReference type="ChEBI" id="CHEBI:29105"/>
    </cofactor>
    <text evidence="1">Binds 1 zinc ion per subunit.</text>
</comment>
<comment type="subcellular location">
    <subcellularLocation>
        <location evidence="2">Cell membrane</location>
        <topology evidence="2">Lipid-anchor</topology>
    </subcellularLocation>
</comment>
<comment type="sequence caution" evidence="5">
    <conflict type="erroneous initiation">
        <sequence resource="EMBL-CDS" id="AAF93983"/>
    </conflict>
</comment>
<dbReference type="EC" id="3.4.24.-"/>
<dbReference type="EMBL" id="AF034434">
    <property type="protein sequence ID" value="AAC12274.1"/>
    <property type="molecule type" value="Genomic_DNA"/>
</dbReference>
<dbReference type="EMBL" id="AE003852">
    <property type="protein sequence ID" value="AAF93983.1"/>
    <property type="status" value="ALT_INIT"/>
    <property type="molecule type" value="Genomic_DNA"/>
</dbReference>
<dbReference type="EMBL" id="M60658">
    <property type="protein sequence ID" value="AAA03050.1"/>
    <property type="molecule type" value="Unassigned_DNA"/>
</dbReference>
<dbReference type="PIR" id="B82276">
    <property type="entry name" value="B82276"/>
</dbReference>
<dbReference type="PIR" id="T09438">
    <property type="entry name" value="T09438"/>
</dbReference>
<dbReference type="RefSeq" id="NP_230468.1">
    <property type="nucleotide sequence ID" value="NC_002505.1"/>
</dbReference>
<dbReference type="SMR" id="P0C6Q7"/>
<dbReference type="STRING" id="243277.VC_0820"/>
<dbReference type="DNASU" id="2614487"/>
<dbReference type="EnsemblBacteria" id="AAF93983">
    <property type="protein sequence ID" value="AAF93983"/>
    <property type="gene ID" value="VC_0820"/>
</dbReference>
<dbReference type="KEGG" id="vch:VC_0820"/>
<dbReference type="PATRIC" id="fig|243277.26.peg.781"/>
<dbReference type="eggNOG" id="ENOG502Z7RH">
    <property type="taxonomic scope" value="Bacteria"/>
</dbReference>
<dbReference type="HOGENOM" id="CLU_008787_0_0_6"/>
<dbReference type="Proteomes" id="UP000000584">
    <property type="component" value="Chromosome 1"/>
</dbReference>
<dbReference type="GO" id="GO:0005886">
    <property type="term" value="C:plasma membrane"/>
    <property type="evidence" value="ECO:0007669"/>
    <property type="project" value="UniProtKB-SubCell"/>
</dbReference>
<dbReference type="GO" id="GO:0046872">
    <property type="term" value="F:metal ion binding"/>
    <property type="evidence" value="ECO:0007669"/>
    <property type="project" value="UniProtKB-KW"/>
</dbReference>
<dbReference type="GO" id="GO:0004222">
    <property type="term" value="F:metalloendopeptidase activity"/>
    <property type="evidence" value="ECO:0007669"/>
    <property type="project" value="InterPro"/>
</dbReference>
<dbReference type="GO" id="GO:0006508">
    <property type="term" value="P:proteolysis"/>
    <property type="evidence" value="ECO:0007669"/>
    <property type="project" value="UniProtKB-KW"/>
</dbReference>
<dbReference type="CDD" id="cd00063">
    <property type="entry name" value="FN3"/>
    <property type="match status" value="1"/>
</dbReference>
<dbReference type="Gene3D" id="2.60.40.10">
    <property type="entry name" value="Immunoglobulins"/>
    <property type="match status" value="1"/>
</dbReference>
<dbReference type="InterPro" id="IPR051256">
    <property type="entry name" value="Dictomallein"/>
</dbReference>
<dbReference type="InterPro" id="IPR003961">
    <property type="entry name" value="FN3_dom"/>
</dbReference>
<dbReference type="InterPro" id="IPR036116">
    <property type="entry name" value="FN3_sf"/>
</dbReference>
<dbReference type="InterPro" id="IPR013783">
    <property type="entry name" value="Ig-like_fold"/>
</dbReference>
<dbReference type="InterPro" id="IPR019503">
    <property type="entry name" value="Peptidase_M66_dom"/>
</dbReference>
<dbReference type="InterPro" id="IPR022218">
    <property type="entry name" value="TagA_dom"/>
</dbReference>
<dbReference type="PANTHER" id="PTHR39540">
    <property type="match status" value="1"/>
</dbReference>
<dbReference type="PANTHER" id="PTHR39540:SF1">
    <property type="entry name" value="DICTOMALLEIN-1-RELATED"/>
    <property type="match status" value="1"/>
</dbReference>
<dbReference type="Pfam" id="PF00041">
    <property type="entry name" value="fn3"/>
    <property type="match status" value="1"/>
</dbReference>
<dbReference type="Pfam" id="PF10462">
    <property type="entry name" value="Peptidase_M66"/>
    <property type="match status" value="1"/>
</dbReference>
<dbReference type="Pfam" id="PF12561">
    <property type="entry name" value="TagA"/>
    <property type="match status" value="1"/>
</dbReference>
<dbReference type="SMART" id="SM00060">
    <property type="entry name" value="FN3"/>
    <property type="match status" value="1"/>
</dbReference>
<dbReference type="SUPFAM" id="SSF49265">
    <property type="entry name" value="Fibronectin type III"/>
    <property type="match status" value="1"/>
</dbReference>
<dbReference type="PROSITE" id="PS50853">
    <property type="entry name" value="FN3"/>
    <property type="match status" value="1"/>
</dbReference>
<dbReference type="PROSITE" id="PS51694">
    <property type="entry name" value="PEPTIDASE_M66"/>
    <property type="match status" value="1"/>
</dbReference>
<dbReference type="PROSITE" id="PS51257">
    <property type="entry name" value="PROKAR_LIPOPROTEIN"/>
    <property type="match status" value="1"/>
</dbReference>
<protein>
    <recommendedName>
        <fullName>ToxR-activated gene A lipoprotein</fullName>
        <ecNumber>3.4.24.-</ecNumber>
    </recommendedName>
</protein>
<organism>
    <name type="scientific">Vibrio cholerae serotype O1 (strain ATCC 39315 / El Tor Inaba N16961)</name>
    <dbReference type="NCBI Taxonomy" id="243277"/>
    <lineage>
        <taxon>Bacteria</taxon>
        <taxon>Pseudomonadati</taxon>
        <taxon>Pseudomonadota</taxon>
        <taxon>Gammaproteobacteria</taxon>
        <taxon>Vibrionales</taxon>
        <taxon>Vibrionaceae</taxon>
        <taxon>Vibrio</taxon>
    </lineage>
</organism>
<name>TAGA_VIBCH</name>
<feature type="signal peptide" evidence="2">
    <location>
        <begin position="1"/>
        <end position="21"/>
    </location>
</feature>
<feature type="chain" id="PRO_0000018190" description="ToxR-activated gene A lipoprotein">
    <location>
        <begin position="22"/>
        <end position="1002"/>
    </location>
</feature>
<feature type="domain" description="Fibronectin type-III" evidence="3">
    <location>
        <begin position="45"/>
        <end position="139"/>
    </location>
</feature>
<feature type="domain" description="Peptidase M66">
    <location>
        <begin position="282"/>
        <end position="536"/>
    </location>
</feature>
<feature type="region of interest" description="Disordered" evidence="4">
    <location>
        <begin position="31"/>
        <end position="53"/>
    </location>
</feature>
<feature type="active site" evidence="1">
    <location>
        <position position="433"/>
    </location>
</feature>
<feature type="binding site" evidence="1">
    <location>
        <position position="432"/>
    </location>
    <ligand>
        <name>Zn(2+)</name>
        <dbReference type="ChEBI" id="CHEBI:29105"/>
        <note>catalytic</note>
    </ligand>
</feature>
<feature type="binding site" evidence="1">
    <location>
        <position position="436"/>
    </location>
    <ligand>
        <name>Zn(2+)</name>
        <dbReference type="ChEBI" id="CHEBI:29105"/>
        <note>catalytic</note>
    </ligand>
</feature>
<feature type="binding site" evidence="1">
    <location>
        <position position="442"/>
    </location>
    <ligand>
        <name>Zn(2+)</name>
        <dbReference type="ChEBI" id="CHEBI:29105"/>
        <note>catalytic</note>
    </ligand>
</feature>
<feature type="lipid moiety-binding region" description="N-palmitoyl cysteine" evidence="2">
    <location>
        <position position="22"/>
    </location>
</feature>
<feature type="lipid moiety-binding region" description="S-diacylglycerol cysteine" evidence="2">
    <location>
        <position position="22"/>
    </location>
</feature>
<feature type="sequence conflict" description="In Ref. 3; AAA03050." evidence="5" ref="3">
    <original>W</original>
    <variation>S</variation>
    <location>
        <position position="67"/>
    </location>
</feature>
<gene>
    <name type="primary">tagA</name>
    <name type="ordered locus">VC_0820</name>
</gene>